<protein>
    <recommendedName>
        <fullName evidence="1">Cysteine desulfurase IscS</fullName>
        <ecNumber evidence="1">2.8.1.7</ecNumber>
    </recommendedName>
</protein>
<accession>B1XB05</accession>
<organism>
    <name type="scientific">Escherichia coli (strain K12 / DH10B)</name>
    <dbReference type="NCBI Taxonomy" id="316385"/>
    <lineage>
        <taxon>Bacteria</taxon>
        <taxon>Pseudomonadati</taxon>
        <taxon>Pseudomonadota</taxon>
        <taxon>Gammaproteobacteria</taxon>
        <taxon>Enterobacterales</taxon>
        <taxon>Enterobacteriaceae</taxon>
        <taxon>Escherichia</taxon>
    </lineage>
</organism>
<feature type="chain" id="PRO_1000119625" description="Cysteine desulfurase IscS">
    <location>
        <begin position="1"/>
        <end position="404"/>
    </location>
</feature>
<feature type="active site" description="Cysteine persulfide intermediate" evidence="1">
    <location>
        <position position="328"/>
    </location>
</feature>
<feature type="binding site" evidence="1">
    <location>
        <begin position="75"/>
        <end position="76"/>
    </location>
    <ligand>
        <name>pyridoxal 5'-phosphate</name>
        <dbReference type="ChEBI" id="CHEBI:597326"/>
    </ligand>
</feature>
<feature type="binding site" evidence="1">
    <location>
        <position position="155"/>
    </location>
    <ligand>
        <name>pyridoxal 5'-phosphate</name>
        <dbReference type="ChEBI" id="CHEBI:597326"/>
    </ligand>
</feature>
<feature type="binding site" evidence="1">
    <location>
        <position position="183"/>
    </location>
    <ligand>
        <name>pyridoxal 5'-phosphate</name>
        <dbReference type="ChEBI" id="CHEBI:597326"/>
    </ligand>
</feature>
<feature type="binding site" evidence="1">
    <location>
        <begin position="203"/>
        <end position="205"/>
    </location>
    <ligand>
        <name>pyridoxal 5'-phosphate</name>
        <dbReference type="ChEBI" id="CHEBI:597326"/>
    </ligand>
</feature>
<feature type="binding site" evidence="1">
    <location>
        <position position="243"/>
    </location>
    <ligand>
        <name>pyridoxal 5'-phosphate</name>
        <dbReference type="ChEBI" id="CHEBI:597326"/>
    </ligand>
</feature>
<feature type="binding site" description="via persulfide group" evidence="1">
    <location>
        <position position="328"/>
    </location>
    <ligand>
        <name>[2Fe-2S] cluster</name>
        <dbReference type="ChEBI" id="CHEBI:190135"/>
        <note>ligand shared with IscU</note>
    </ligand>
</feature>
<feature type="modified residue" description="N6-(pyridoxal phosphate)lysine" evidence="1">
    <location>
        <position position="206"/>
    </location>
</feature>
<keyword id="KW-0001">2Fe-2S</keyword>
<keyword id="KW-0963">Cytoplasm</keyword>
<keyword id="KW-0408">Iron</keyword>
<keyword id="KW-0411">Iron-sulfur</keyword>
<keyword id="KW-0479">Metal-binding</keyword>
<keyword id="KW-0663">Pyridoxal phosphate</keyword>
<keyword id="KW-0808">Transferase</keyword>
<name>ISCS_ECODH</name>
<proteinExistence type="inferred from homology"/>
<sequence>MKLPIYLDYSATTPVDPRVAEKMMQFMTMDGTFGNPASRSHRFGWQAEEAVDIARNQIADLVGADPREIVFTSGATESDNLAIKGAANFYQKKGKHIITSKTEHKAVLDTCRQLEREGFEVTYLAPQRNGIIDLKELEAAMRDDTILVSIMHVNNEIGVVQDIAAIGEMCRARGIIYHVDATQSVGKLPIDLSQLKVDLMSFSGHKIYGPKGIGALYVRRKPRVRIEAQMHGGGHERGMRSGTLPVHQIVGMGEAYRIAKEEMATEMERLRGLRNRLWNGIKDIEEVYLNGDLEHGAPNILNVSFNYVEGESLIMALKDLAVSSGSACTSASLEPSYVLRALGLNDELAHSSIRFSLGRFTTEEEIDYTIELVRKSIGRLRDLSPLWEMYKQGVDLNSIEWAHH</sequence>
<evidence type="ECO:0000255" key="1">
    <source>
        <dbReference type="HAMAP-Rule" id="MF_00331"/>
    </source>
</evidence>
<gene>
    <name evidence="1" type="primary">iscS</name>
    <name type="ordered locus">ECDH10B_2697</name>
</gene>
<comment type="function">
    <text evidence="1">Master enzyme that delivers sulfur to a number of partners involved in Fe-S cluster assembly, tRNA modification or cofactor biosynthesis. Catalyzes the removal of elemental sulfur and selenium atoms from cysteine and selenocysteine to produce alanine. Functions as a sulfur delivery protein for Fe-S cluster synthesis onto IscU, an Fe-S scaffold assembly protein, as well as other S acceptor proteins. Also functions as a selenium delivery protein in the pathway for the biosynthesis of selenophosphate.</text>
</comment>
<comment type="catalytic activity">
    <reaction evidence="1">
        <text>(sulfur carrier)-H + L-cysteine = (sulfur carrier)-SH + L-alanine</text>
        <dbReference type="Rhea" id="RHEA:43892"/>
        <dbReference type="Rhea" id="RHEA-COMP:14737"/>
        <dbReference type="Rhea" id="RHEA-COMP:14739"/>
        <dbReference type="ChEBI" id="CHEBI:29917"/>
        <dbReference type="ChEBI" id="CHEBI:35235"/>
        <dbReference type="ChEBI" id="CHEBI:57972"/>
        <dbReference type="ChEBI" id="CHEBI:64428"/>
        <dbReference type="EC" id="2.8.1.7"/>
    </reaction>
</comment>
<comment type="cofactor">
    <cofactor evidence="1">
        <name>pyridoxal 5'-phosphate</name>
        <dbReference type="ChEBI" id="CHEBI:597326"/>
    </cofactor>
</comment>
<comment type="pathway">
    <text evidence="1">Cofactor biosynthesis; iron-sulfur cluster biosynthesis.</text>
</comment>
<comment type="subunit">
    <text evidence="1">Homodimer. Forms a heterotetramer with IscU, interacts with other sulfur acceptors.</text>
</comment>
<comment type="subcellular location">
    <subcellularLocation>
        <location evidence="1">Cytoplasm</location>
    </subcellularLocation>
</comment>
<comment type="similarity">
    <text evidence="1">Belongs to the class-V pyridoxal-phosphate-dependent aminotransferase family. NifS/IscS subfamily.</text>
</comment>
<dbReference type="EC" id="2.8.1.7" evidence="1"/>
<dbReference type="EMBL" id="CP000948">
    <property type="protein sequence ID" value="ACB03682.1"/>
    <property type="molecule type" value="Genomic_DNA"/>
</dbReference>
<dbReference type="RefSeq" id="WP_001295373.1">
    <property type="nucleotide sequence ID" value="NC_010473.1"/>
</dbReference>
<dbReference type="SMR" id="B1XB05"/>
<dbReference type="GeneID" id="93774606"/>
<dbReference type="KEGG" id="ecd:ECDH10B_2697"/>
<dbReference type="HOGENOM" id="CLU_003433_0_2_6"/>
<dbReference type="UniPathway" id="UPA00266"/>
<dbReference type="GO" id="GO:1990221">
    <property type="term" value="C:L-cysteine desulfurase complex"/>
    <property type="evidence" value="ECO:0007669"/>
    <property type="project" value="UniProtKB-ARBA"/>
</dbReference>
<dbReference type="GO" id="GO:0051537">
    <property type="term" value="F:2 iron, 2 sulfur cluster binding"/>
    <property type="evidence" value="ECO:0007669"/>
    <property type="project" value="UniProtKB-UniRule"/>
</dbReference>
<dbReference type="GO" id="GO:0031071">
    <property type="term" value="F:cysteine desulfurase activity"/>
    <property type="evidence" value="ECO:0007669"/>
    <property type="project" value="UniProtKB-UniRule"/>
</dbReference>
<dbReference type="GO" id="GO:0046872">
    <property type="term" value="F:metal ion binding"/>
    <property type="evidence" value="ECO:0007669"/>
    <property type="project" value="UniProtKB-KW"/>
</dbReference>
<dbReference type="GO" id="GO:0030170">
    <property type="term" value="F:pyridoxal phosphate binding"/>
    <property type="evidence" value="ECO:0007669"/>
    <property type="project" value="UniProtKB-UniRule"/>
</dbReference>
<dbReference type="GO" id="GO:0044571">
    <property type="term" value="P:[2Fe-2S] cluster assembly"/>
    <property type="evidence" value="ECO:0007669"/>
    <property type="project" value="UniProtKB-UniRule"/>
</dbReference>
<dbReference type="FunFam" id="3.40.640.10:FF:000003">
    <property type="entry name" value="Cysteine desulfurase IscS"/>
    <property type="match status" value="1"/>
</dbReference>
<dbReference type="FunFam" id="3.90.1150.10:FF:000002">
    <property type="entry name" value="Cysteine desulfurase IscS"/>
    <property type="match status" value="1"/>
</dbReference>
<dbReference type="Gene3D" id="3.90.1150.10">
    <property type="entry name" value="Aspartate Aminotransferase, domain 1"/>
    <property type="match status" value="1"/>
</dbReference>
<dbReference type="Gene3D" id="3.40.640.10">
    <property type="entry name" value="Type I PLP-dependent aspartate aminotransferase-like (Major domain)"/>
    <property type="match status" value="1"/>
</dbReference>
<dbReference type="HAMAP" id="MF_00331">
    <property type="entry name" value="Cys_desulf_IscS"/>
    <property type="match status" value="1"/>
</dbReference>
<dbReference type="InterPro" id="IPR000192">
    <property type="entry name" value="Aminotrans_V_dom"/>
</dbReference>
<dbReference type="InterPro" id="IPR020578">
    <property type="entry name" value="Aminotrans_V_PyrdxlP_BS"/>
</dbReference>
<dbReference type="InterPro" id="IPR010240">
    <property type="entry name" value="Cys_deSase_IscS"/>
</dbReference>
<dbReference type="InterPro" id="IPR016454">
    <property type="entry name" value="Cysteine_dSase"/>
</dbReference>
<dbReference type="InterPro" id="IPR015424">
    <property type="entry name" value="PyrdxlP-dep_Trfase"/>
</dbReference>
<dbReference type="InterPro" id="IPR015421">
    <property type="entry name" value="PyrdxlP-dep_Trfase_major"/>
</dbReference>
<dbReference type="InterPro" id="IPR015422">
    <property type="entry name" value="PyrdxlP-dep_Trfase_small"/>
</dbReference>
<dbReference type="NCBIfam" id="TIGR02006">
    <property type="entry name" value="IscS"/>
    <property type="match status" value="1"/>
</dbReference>
<dbReference type="NCBIfam" id="NF002806">
    <property type="entry name" value="PRK02948.1"/>
    <property type="match status" value="1"/>
</dbReference>
<dbReference type="NCBIfam" id="NF010611">
    <property type="entry name" value="PRK14012.1"/>
    <property type="match status" value="1"/>
</dbReference>
<dbReference type="PANTHER" id="PTHR11601:SF34">
    <property type="entry name" value="CYSTEINE DESULFURASE"/>
    <property type="match status" value="1"/>
</dbReference>
<dbReference type="PANTHER" id="PTHR11601">
    <property type="entry name" value="CYSTEINE DESULFURYLASE FAMILY MEMBER"/>
    <property type="match status" value="1"/>
</dbReference>
<dbReference type="Pfam" id="PF00266">
    <property type="entry name" value="Aminotran_5"/>
    <property type="match status" value="1"/>
</dbReference>
<dbReference type="PIRSF" id="PIRSF005572">
    <property type="entry name" value="NifS"/>
    <property type="match status" value="1"/>
</dbReference>
<dbReference type="SUPFAM" id="SSF53383">
    <property type="entry name" value="PLP-dependent transferases"/>
    <property type="match status" value="1"/>
</dbReference>
<dbReference type="PROSITE" id="PS00595">
    <property type="entry name" value="AA_TRANSFER_CLASS_5"/>
    <property type="match status" value="1"/>
</dbReference>
<reference key="1">
    <citation type="journal article" date="2008" name="J. Bacteriol.">
        <title>The complete genome sequence of Escherichia coli DH10B: insights into the biology of a laboratory workhorse.</title>
        <authorList>
            <person name="Durfee T."/>
            <person name="Nelson R."/>
            <person name="Baldwin S."/>
            <person name="Plunkett G. III"/>
            <person name="Burland V."/>
            <person name="Mau B."/>
            <person name="Petrosino J.F."/>
            <person name="Qin X."/>
            <person name="Muzny D.M."/>
            <person name="Ayele M."/>
            <person name="Gibbs R.A."/>
            <person name="Csorgo B."/>
            <person name="Posfai G."/>
            <person name="Weinstock G.M."/>
            <person name="Blattner F.R."/>
        </authorList>
    </citation>
    <scope>NUCLEOTIDE SEQUENCE [LARGE SCALE GENOMIC DNA]</scope>
    <source>
        <strain>K12 / DH10B</strain>
    </source>
</reference>